<name>SYFA_HAEIE</name>
<accession>A5UCB0</accession>
<comment type="catalytic activity">
    <reaction evidence="1">
        <text>tRNA(Phe) + L-phenylalanine + ATP = L-phenylalanyl-tRNA(Phe) + AMP + diphosphate + H(+)</text>
        <dbReference type="Rhea" id="RHEA:19413"/>
        <dbReference type="Rhea" id="RHEA-COMP:9668"/>
        <dbReference type="Rhea" id="RHEA-COMP:9699"/>
        <dbReference type="ChEBI" id="CHEBI:15378"/>
        <dbReference type="ChEBI" id="CHEBI:30616"/>
        <dbReference type="ChEBI" id="CHEBI:33019"/>
        <dbReference type="ChEBI" id="CHEBI:58095"/>
        <dbReference type="ChEBI" id="CHEBI:78442"/>
        <dbReference type="ChEBI" id="CHEBI:78531"/>
        <dbReference type="ChEBI" id="CHEBI:456215"/>
        <dbReference type="EC" id="6.1.1.20"/>
    </reaction>
</comment>
<comment type="cofactor">
    <cofactor evidence="1">
        <name>Mg(2+)</name>
        <dbReference type="ChEBI" id="CHEBI:18420"/>
    </cofactor>
    <text evidence="1">Binds 2 magnesium ions per tetramer.</text>
</comment>
<comment type="subunit">
    <text evidence="1">Tetramer of two alpha and two beta subunits.</text>
</comment>
<comment type="subcellular location">
    <subcellularLocation>
        <location evidence="1">Cytoplasm</location>
    </subcellularLocation>
</comment>
<comment type="similarity">
    <text evidence="1">Belongs to the class-II aminoacyl-tRNA synthetase family. Phe-tRNA synthetase alpha subunit type 1 subfamily.</text>
</comment>
<organism>
    <name type="scientific">Haemophilus influenzae (strain PittEE)</name>
    <dbReference type="NCBI Taxonomy" id="374930"/>
    <lineage>
        <taxon>Bacteria</taxon>
        <taxon>Pseudomonadati</taxon>
        <taxon>Pseudomonadota</taxon>
        <taxon>Gammaproteobacteria</taxon>
        <taxon>Pasteurellales</taxon>
        <taxon>Pasteurellaceae</taxon>
        <taxon>Haemophilus</taxon>
    </lineage>
</organism>
<evidence type="ECO:0000255" key="1">
    <source>
        <dbReference type="HAMAP-Rule" id="MF_00281"/>
    </source>
</evidence>
<gene>
    <name evidence="1" type="primary">pheS</name>
    <name type="ordered locus">CGSHiEE_05120</name>
</gene>
<sequence length="329" mass="38107">MQHLNELIEKAKLAIESIQDRSLTALDEIRVEYFGKKGHFTQLMQELRNVSAEERPAMGAKINEAKQAALEFLNAKKTEWEQAELNAKLEKERVDVSLPGRKVETGGLHPVTMTINRVTKFFSELGFSVENGPEIESDYYNFDALNIPKHHPARADHDTFWFNPELLLRTQTSGVQIRTMEKMQPPIRIMAPGRVYRNDYDQTHTPMFHQIELLYVDKKANFTELKGLLHDFLRAFFEEDLQVRFRPSYFPFTEPSAEVDVMGKNGKWLEVLGCGMVHPNVLRNVGIDPNEYSGFAVGMGVERLTMLRYNVTDLRSFFENDLRFLKQFK</sequence>
<keyword id="KW-0030">Aminoacyl-tRNA synthetase</keyword>
<keyword id="KW-0067">ATP-binding</keyword>
<keyword id="KW-0963">Cytoplasm</keyword>
<keyword id="KW-0436">Ligase</keyword>
<keyword id="KW-0460">Magnesium</keyword>
<keyword id="KW-0479">Metal-binding</keyword>
<keyword id="KW-0547">Nucleotide-binding</keyword>
<keyword id="KW-0648">Protein biosynthesis</keyword>
<proteinExistence type="inferred from homology"/>
<feature type="chain" id="PRO_1000006838" description="Phenylalanine--tRNA ligase alpha subunit">
    <location>
        <begin position="1"/>
        <end position="329"/>
    </location>
</feature>
<feature type="binding site" evidence="1">
    <location>
        <position position="254"/>
    </location>
    <ligand>
        <name>Mg(2+)</name>
        <dbReference type="ChEBI" id="CHEBI:18420"/>
        <note>shared with beta subunit</note>
    </ligand>
</feature>
<dbReference type="EC" id="6.1.1.20" evidence="1"/>
<dbReference type="EMBL" id="CP000671">
    <property type="protein sequence ID" value="ABQ98411.1"/>
    <property type="molecule type" value="Genomic_DNA"/>
</dbReference>
<dbReference type="SMR" id="A5UCB0"/>
<dbReference type="KEGG" id="hip:CGSHiEE_05120"/>
<dbReference type="HOGENOM" id="CLU_025086_0_1_6"/>
<dbReference type="GO" id="GO:0005737">
    <property type="term" value="C:cytoplasm"/>
    <property type="evidence" value="ECO:0007669"/>
    <property type="project" value="UniProtKB-SubCell"/>
</dbReference>
<dbReference type="GO" id="GO:0005524">
    <property type="term" value="F:ATP binding"/>
    <property type="evidence" value="ECO:0007669"/>
    <property type="project" value="UniProtKB-UniRule"/>
</dbReference>
<dbReference type="GO" id="GO:0000287">
    <property type="term" value="F:magnesium ion binding"/>
    <property type="evidence" value="ECO:0007669"/>
    <property type="project" value="UniProtKB-UniRule"/>
</dbReference>
<dbReference type="GO" id="GO:0004826">
    <property type="term" value="F:phenylalanine-tRNA ligase activity"/>
    <property type="evidence" value="ECO:0007669"/>
    <property type="project" value="UniProtKB-UniRule"/>
</dbReference>
<dbReference type="GO" id="GO:0000049">
    <property type="term" value="F:tRNA binding"/>
    <property type="evidence" value="ECO:0007669"/>
    <property type="project" value="InterPro"/>
</dbReference>
<dbReference type="GO" id="GO:0006432">
    <property type="term" value="P:phenylalanyl-tRNA aminoacylation"/>
    <property type="evidence" value="ECO:0007669"/>
    <property type="project" value="UniProtKB-UniRule"/>
</dbReference>
<dbReference type="CDD" id="cd00496">
    <property type="entry name" value="PheRS_alpha_core"/>
    <property type="match status" value="1"/>
</dbReference>
<dbReference type="FunFam" id="3.30.930.10:FF:000003">
    <property type="entry name" value="Phenylalanine--tRNA ligase alpha subunit"/>
    <property type="match status" value="1"/>
</dbReference>
<dbReference type="Gene3D" id="3.30.930.10">
    <property type="entry name" value="Bira Bifunctional Protein, Domain 2"/>
    <property type="match status" value="1"/>
</dbReference>
<dbReference type="HAMAP" id="MF_00281">
    <property type="entry name" value="Phe_tRNA_synth_alpha1"/>
    <property type="match status" value="1"/>
</dbReference>
<dbReference type="InterPro" id="IPR006195">
    <property type="entry name" value="aa-tRNA-synth_II"/>
</dbReference>
<dbReference type="InterPro" id="IPR045864">
    <property type="entry name" value="aa-tRNA-synth_II/BPL/LPL"/>
</dbReference>
<dbReference type="InterPro" id="IPR004529">
    <property type="entry name" value="Phe-tRNA-synth_IIc_asu"/>
</dbReference>
<dbReference type="InterPro" id="IPR004188">
    <property type="entry name" value="Phe-tRNA_ligase_II_N"/>
</dbReference>
<dbReference type="InterPro" id="IPR022911">
    <property type="entry name" value="Phe_tRNA_ligase_alpha1_bac"/>
</dbReference>
<dbReference type="InterPro" id="IPR002319">
    <property type="entry name" value="Phenylalanyl-tRNA_Synthase"/>
</dbReference>
<dbReference type="InterPro" id="IPR010978">
    <property type="entry name" value="tRNA-bd_arm"/>
</dbReference>
<dbReference type="NCBIfam" id="TIGR00468">
    <property type="entry name" value="pheS"/>
    <property type="match status" value="1"/>
</dbReference>
<dbReference type="PANTHER" id="PTHR11538:SF41">
    <property type="entry name" value="PHENYLALANINE--TRNA LIGASE, MITOCHONDRIAL"/>
    <property type="match status" value="1"/>
</dbReference>
<dbReference type="PANTHER" id="PTHR11538">
    <property type="entry name" value="PHENYLALANYL-TRNA SYNTHETASE"/>
    <property type="match status" value="1"/>
</dbReference>
<dbReference type="Pfam" id="PF02912">
    <property type="entry name" value="Phe_tRNA-synt_N"/>
    <property type="match status" value="1"/>
</dbReference>
<dbReference type="Pfam" id="PF01409">
    <property type="entry name" value="tRNA-synt_2d"/>
    <property type="match status" value="1"/>
</dbReference>
<dbReference type="SUPFAM" id="SSF55681">
    <property type="entry name" value="Class II aaRS and biotin synthetases"/>
    <property type="match status" value="1"/>
</dbReference>
<dbReference type="SUPFAM" id="SSF46589">
    <property type="entry name" value="tRNA-binding arm"/>
    <property type="match status" value="1"/>
</dbReference>
<dbReference type="PROSITE" id="PS50862">
    <property type="entry name" value="AA_TRNA_LIGASE_II"/>
    <property type="match status" value="1"/>
</dbReference>
<protein>
    <recommendedName>
        <fullName evidence="1">Phenylalanine--tRNA ligase alpha subunit</fullName>
        <ecNumber evidence="1">6.1.1.20</ecNumber>
    </recommendedName>
    <alternativeName>
        <fullName evidence="1">Phenylalanyl-tRNA synthetase alpha subunit</fullName>
        <shortName evidence="1">PheRS</shortName>
    </alternativeName>
</protein>
<reference key="1">
    <citation type="journal article" date="2007" name="Genome Biol.">
        <title>Characterization and modeling of the Haemophilus influenzae core and supragenomes based on the complete genomic sequences of Rd and 12 clinical nontypeable strains.</title>
        <authorList>
            <person name="Hogg J.S."/>
            <person name="Hu F.Z."/>
            <person name="Janto B."/>
            <person name="Boissy R."/>
            <person name="Hayes J."/>
            <person name="Keefe R."/>
            <person name="Post J.C."/>
            <person name="Ehrlich G.D."/>
        </authorList>
    </citation>
    <scope>NUCLEOTIDE SEQUENCE [LARGE SCALE GENOMIC DNA]</scope>
    <source>
        <strain>PittEE</strain>
    </source>
</reference>